<accession>A1TWB8</accession>
<evidence type="ECO:0000255" key="1">
    <source>
        <dbReference type="HAMAP-Rule" id="MF_00144"/>
    </source>
</evidence>
<comment type="function">
    <text evidence="1">Catalyzes the 2-thiolation of uridine at the wobble position (U34) of tRNA, leading to the formation of s(2)U34.</text>
</comment>
<comment type="catalytic activity">
    <reaction evidence="1">
        <text>S-sulfanyl-L-cysteinyl-[protein] + uridine(34) in tRNA + AH2 + ATP = 2-thiouridine(34) in tRNA + L-cysteinyl-[protein] + A + AMP + diphosphate + H(+)</text>
        <dbReference type="Rhea" id="RHEA:47032"/>
        <dbReference type="Rhea" id="RHEA-COMP:10131"/>
        <dbReference type="Rhea" id="RHEA-COMP:11726"/>
        <dbReference type="Rhea" id="RHEA-COMP:11727"/>
        <dbReference type="Rhea" id="RHEA-COMP:11728"/>
        <dbReference type="ChEBI" id="CHEBI:13193"/>
        <dbReference type="ChEBI" id="CHEBI:15378"/>
        <dbReference type="ChEBI" id="CHEBI:17499"/>
        <dbReference type="ChEBI" id="CHEBI:29950"/>
        <dbReference type="ChEBI" id="CHEBI:30616"/>
        <dbReference type="ChEBI" id="CHEBI:33019"/>
        <dbReference type="ChEBI" id="CHEBI:61963"/>
        <dbReference type="ChEBI" id="CHEBI:65315"/>
        <dbReference type="ChEBI" id="CHEBI:87170"/>
        <dbReference type="ChEBI" id="CHEBI:456215"/>
        <dbReference type="EC" id="2.8.1.13"/>
    </reaction>
</comment>
<comment type="subcellular location">
    <subcellularLocation>
        <location evidence="1">Cytoplasm</location>
    </subcellularLocation>
</comment>
<comment type="similarity">
    <text evidence="1">Belongs to the MnmA/TRMU family.</text>
</comment>
<name>MNMA_PARC0</name>
<sequence length="378" mass="41230">MTASPKQRIVVGLSGGVDSAVTAHLLKQQGHEVVGIFMKNWEDDDDSEYCSSNVDFVDAAAVADVIGIEIEHVNFAAEYKDRVFAEFLREYEAGRTPNPDVLCNAEIKFKAFLDHAMRVGAEKIATGHYARVRHNPATGLHELLKGLDPAKDQSYFLHRLNQSQLSRTLFPVGELRKTEVRRIAEEIGLPNAKKKDSTGICFIGERPFREFLNRYIQHAPGPILDDRGRRLGQHVGLSFYTLGQRQGLGIGGVKDKGAQRGGGEHAPWFVARKEVERNVLRVVQGHDHPWLLSHTLQATDANWVAGRPPAAGACAAKTRYRQQDAACTVTQAEGGDFALSFPEAQWAVTPGQSAVLYDGEVCLGGGVITAAGPVNSAA</sequence>
<proteinExistence type="inferred from homology"/>
<feature type="chain" id="PRO_1000057942" description="tRNA-specific 2-thiouridylase MnmA">
    <location>
        <begin position="1"/>
        <end position="378"/>
    </location>
</feature>
<feature type="region of interest" description="Interaction with target base in tRNA" evidence="1">
    <location>
        <begin position="98"/>
        <end position="100"/>
    </location>
</feature>
<feature type="region of interest" description="Interaction with tRNA" evidence="1">
    <location>
        <begin position="151"/>
        <end position="153"/>
    </location>
</feature>
<feature type="region of interest" description="Interaction with tRNA" evidence="1">
    <location>
        <begin position="319"/>
        <end position="320"/>
    </location>
</feature>
<feature type="active site" description="Nucleophile" evidence="1">
    <location>
        <position position="103"/>
    </location>
</feature>
<feature type="active site" description="Cysteine persulfide intermediate" evidence="1">
    <location>
        <position position="201"/>
    </location>
</feature>
<feature type="binding site" evidence="1">
    <location>
        <begin position="12"/>
        <end position="19"/>
    </location>
    <ligand>
        <name>ATP</name>
        <dbReference type="ChEBI" id="CHEBI:30616"/>
    </ligand>
</feature>
<feature type="binding site" evidence="1">
    <location>
        <position position="38"/>
    </location>
    <ligand>
        <name>ATP</name>
        <dbReference type="ChEBI" id="CHEBI:30616"/>
    </ligand>
</feature>
<feature type="binding site" evidence="1">
    <location>
        <position position="127"/>
    </location>
    <ligand>
        <name>ATP</name>
        <dbReference type="ChEBI" id="CHEBI:30616"/>
    </ligand>
</feature>
<feature type="site" description="Interaction with tRNA" evidence="1">
    <location>
        <position position="128"/>
    </location>
</feature>
<feature type="site" description="Interaction with tRNA" evidence="1">
    <location>
        <position position="352"/>
    </location>
</feature>
<feature type="disulfide bond" description="Alternate" evidence="1">
    <location>
        <begin position="103"/>
        <end position="201"/>
    </location>
</feature>
<keyword id="KW-0067">ATP-binding</keyword>
<keyword id="KW-0963">Cytoplasm</keyword>
<keyword id="KW-1015">Disulfide bond</keyword>
<keyword id="KW-0547">Nucleotide-binding</keyword>
<keyword id="KW-0694">RNA-binding</keyword>
<keyword id="KW-0808">Transferase</keyword>
<keyword id="KW-0819">tRNA processing</keyword>
<keyword id="KW-0820">tRNA-binding</keyword>
<dbReference type="EC" id="2.8.1.13" evidence="1"/>
<dbReference type="EMBL" id="CP000512">
    <property type="protein sequence ID" value="ABM35256.1"/>
    <property type="molecule type" value="Genomic_DNA"/>
</dbReference>
<dbReference type="RefSeq" id="WP_011797722.1">
    <property type="nucleotide sequence ID" value="NC_008752.1"/>
</dbReference>
<dbReference type="SMR" id="A1TWB8"/>
<dbReference type="STRING" id="397945.Aave_4724"/>
<dbReference type="GeneID" id="79789722"/>
<dbReference type="KEGG" id="aav:Aave_4724"/>
<dbReference type="eggNOG" id="COG0482">
    <property type="taxonomic scope" value="Bacteria"/>
</dbReference>
<dbReference type="HOGENOM" id="CLU_035188_1_0_4"/>
<dbReference type="OrthoDB" id="9800696at2"/>
<dbReference type="Proteomes" id="UP000002596">
    <property type="component" value="Chromosome"/>
</dbReference>
<dbReference type="GO" id="GO:0005737">
    <property type="term" value="C:cytoplasm"/>
    <property type="evidence" value="ECO:0007669"/>
    <property type="project" value="UniProtKB-SubCell"/>
</dbReference>
<dbReference type="GO" id="GO:0005524">
    <property type="term" value="F:ATP binding"/>
    <property type="evidence" value="ECO:0007669"/>
    <property type="project" value="UniProtKB-KW"/>
</dbReference>
<dbReference type="GO" id="GO:0000049">
    <property type="term" value="F:tRNA binding"/>
    <property type="evidence" value="ECO:0007669"/>
    <property type="project" value="UniProtKB-KW"/>
</dbReference>
<dbReference type="GO" id="GO:0103016">
    <property type="term" value="F:tRNA-uridine 2-sulfurtransferase activity"/>
    <property type="evidence" value="ECO:0007669"/>
    <property type="project" value="UniProtKB-EC"/>
</dbReference>
<dbReference type="GO" id="GO:0002143">
    <property type="term" value="P:tRNA wobble position uridine thiolation"/>
    <property type="evidence" value="ECO:0007669"/>
    <property type="project" value="TreeGrafter"/>
</dbReference>
<dbReference type="CDD" id="cd01998">
    <property type="entry name" value="MnmA_TRMU-like"/>
    <property type="match status" value="1"/>
</dbReference>
<dbReference type="FunFam" id="2.30.30.280:FF:000001">
    <property type="entry name" value="tRNA-specific 2-thiouridylase MnmA"/>
    <property type="match status" value="1"/>
</dbReference>
<dbReference type="FunFam" id="2.40.30.10:FF:000023">
    <property type="entry name" value="tRNA-specific 2-thiouridylase MnmA"/>
    <property type="match status" value="1"/>
</dbReference>
<dbReference type="FunFam" id="3.40.50.620:FF:000004">
    <property type="entry name" value="tRNA-specific 2-thiouridylase MnmA"/>
    <property type="match status" value="1"/>
</dbReference>
<dbReference type="Gene3D" id="2.30.30.280">
    <property type="entry name" value="Adenine nucleotide alpha hydrolases-like domains"/>
    <property type="match status" value="1"/>
</dbReference>
<dbReference type="Gene3D" id="3.40.50.620">
    <property type="entry name" value="HUPs"/>
    <property type="match status" value="1"/>
</dbReference>
<dbReference type="Gene3D" id="2.40.30.10">
    <property type="entry name" value="Translation factors"/>
    <property type="match status" value="1"/>
</dbReference>
<dbReference type="HAMAP" id="MF_00144">
    <property type="entry name" value="tRNA_thiouridyl_MnmA"/>
    <property type="match status" value="1"/>
</dbReference>
<dbReference type="InterPro" id="IPR004506">
    <property type="entry name" value="MnmA-like"/>
</dbReference>
<dbReference type="InterPro" id="IPR046885">
    <property type="entry name" value="MnmA-like_C"/>
</dbReference>
<dbReference type="InterPro" id="IPR046884">
    <property type="entry name" value="MnmA-like_central"/>
</dbReference>
<dbReference type="InterPro" id="IPR023382">
    <property type="entry name" value="MnmA-like_central_sf"/>
</dbReference>
<dbReference type="InterPro" id="IPR014729">
    <property type="entry name" value="Rossmann-like_a/b/a_fold"/>
</dbReference>
<dbReference type="NCBIfam" id="NF001138">
    <property type="entry name" value="PRK00143.1"/>
    <property type="match status" value="1"/>
</dbReference>
<dbReference type="NCBIfam" id="TIGR00420">
    <property type="entry name" value="trmU"/>
    <property type="match status" value="1"/>
</dbReference>
<dbReference type="PANTHER" id="PTHR11933:SF5">
    <property type="entry name" value="MITOCHONDRIAL TRNA-SPECIFIC 2-THIOURIDYLASE 1"/>
    <property type="match status" value="1"/>
</dbReference>
<dbReference type="PANTHER" id="PTHR11933">
    <property type="entry name" value="TRNA 5-METHYLAMINOMETHYL-2-THIOURIDYLATE -METHYLTRANSFERASE"/>
    <property type="match status" value="1"/>
</dbReference>
<dbReference type="Pfam" id="PF03054">
    <property type="entry name" value="tRNA_Me_trans"/>
    <property type="match status" value="1"/>
</dbReference>
<dbReference type="Pfam" id="PF20258">
    <property type="entry name" value="tRNA_Me_trans_C"/>
    <property type="match status" value="1"/>
</dbReference>
<dbReference type="Pfam" id="PF20259">
    <property type="entry name" value="tRNA_Me_trans_M"/>
    <property type="match status" value="1"/>
</dbReference>
<dbReference type="SUPFAM" id="SSF52402">
    <property type="entry name" value="Adenine nucleotide alpha hydrolases-like"/>
    <property type="match status" value="1"/>
</dbReference>
<organism>
    <name type="scientific">Paracidovorax citrulli (strain AAC00-1)</name>
    <name type="common">Acidovorax citrulli</name>
    <dbReference type="NCBI Taxonomy" id="397945"/>
    <lineage>
        <taxon>Bacteria</taxon>
        <taxon>Pseudomonadati</taxon>
        <taxon>Pseudomonadota</taxon>
        <taxon>Betaproteobacteria</taxon>
        <taxon>Burkholderiales</taxon>
        <taxon>Comamonadaceae</taxon>
        <taxon>Paracidovorax</taxon>
    </lineage>
</organism>
<protein>
    <recommendedName>
        <fullName evidence="1">tRNA-specific 2-thiouridylase MnmA</fullName>
        <ecNumber evidence="1">2.8.1.13</ecNumber>
    </recommendedName>
</protein>
<gene>
    <name evidence="1" type="primary">mnmA</name>
    <name type="synonym">trmU</name>
    <name type="ordered locus">Aave_4724</name>
</gene>
<reference key="1">
    <citation type="submission" date="2006-12" db="EMBL/GenBank/DDBJ databases">
        <title>Complete sequence of Acidovorax avenae subsp. citrulli AAC00-1.</title>
        <authorList>
            <person name="Copeland A."/>
            <person name="Lucas S."/>
            <person name="Lapidus A."/>
            <person name="Barry K."/>
            <person name="Detter J.C."/>
            <person name="Glavina del Rio T."/>
            <person name="Dalin E."/>
            <person name="Tice H."/>
            <person name="Pitluck S."/>
            <person name="Kiss H."/>
            <person name="Brettin T."/>
            <person name="Bruce D."/>
            <person name="Han C."/>
            <person name="Tapia R."/>
            <person name="Gilna P."/>
            <person name="Schmutz J."/>
            <person name="Larimer F."/>
            <person name="Land M."/>
            <person name="Hauser L."/>
            <person name="Kyrpides N."/>
            <person name="Kim E."/>
            <person name="Stahl D."/>
            <person name="Richardson P."/>
        </authorList>
    </citation>
    <scope>NUCLEOTIDE SEQUENCE [LARGE SCALE GENOMIC DNA]</scope>
    <source>
        <strain>AAC00-1</strain>
    </source>
</reference>